<organism>
    <name type="scientific">Drosophila simulans</name>
    <name type="common">Fruit fly</name>
    <dbReference type="NCBI Taxonomy" id="7240"/>
    <lineage>
        <taxon>Eukaryota</taxon>
        <taxon>Metazoa</taxon>
        <taxon>Ecdysozoa</taxon>
        <taxon>Arthropoda</taxon>
        <taxon>Hexapoda</taxon>
        <taxon>Insecta</taxon>
        <taxon>Pterygota</taxon>
        <taxon>Neoptera</taxon>
        <taxon>Endopterygota</taxon>
        <taxon>Diptera</taxon>
        <taxon>Brachycera</taxon>
        <taxon>Muscomorpha</taxon>
        <taxon>Ephydroidea</taxon>
        <taxon>Drosophilidae</taxon>
        <taxon>Drosophila</taxon>
        <taxon>Sophophora</taxon>
    </lineage>
</organism>
<evidence type="ECO:0000256" key="1">
    <source>
        <dbReference type="SAM" id="MobiDB-lite"/>
    </source>
</evidence>
<comment type="developmental stage">
    <text>Produced by third-instar larvae.</text>
</comment>
<reference key="1">
    <citation type="journal article" date="1988" name="J. Mol. Biol.">
        <title>Evolution and expression of the Sgs-3 glue gene of Drosophila.</title>
        <authorList>
            <person name="Martin C.H."/>
            <person name="Mayeda C.A."/>
            <person name="Meyerowitz E.M."/>
        </authorList>
    </citation>
    <scope>NUCLEOTIDE SEQUENCE</scope>
</reference>
<feature type="signal peptide">
    <location>
        <begin position="1"/>
        <end position="23"/>
    </location>
</feature>
<feature type="chain" id="PRO_0000022330" description="Salivary glue protein Sgs-3">
    <location>
        <begin position="24"/>
        <end position="217"/>
    </location>
</feature>
<feature type="region of interest" description="Disordered" evidence="1">
    <location>
        <begin position="45"/>
        <end position="163"/>
    </location>
</feature>
<feature type="compositionally biased region" description="Low complexity" evidence="1">
    <location>
        <begin position="45"/>
        <end position="130"/>
    </location>
</feature>
<feature type="compositionally biased region" description="Basic residues" evidence="1">
    <location>
        <begin position="131"/>
        <end position="154"/>
    </location>
</feature>
<keyword id="KW-0677">Repeat</keyword>
<keyword id="KW-0732">Signal</keyword>
<protein>
    <recommendedName>
        <fullName>Salivary glue protein Sgs-3</fullName>
    </recommendedName>
</protein>
<proteinExistence type="evidence at transcript level"/>
<accession>P13729</accession>
<dbReference type="PIR" id="S01358">
    <property type="entry name" value="S01358"/>
</dbReference>
<dbReference type="ChiTaRS" id="Sgs3">
    <property type="organism name" value="fly"/>
</dbReference>
<sequence>MKLTIATVLASILLIGFANVANCSDCGCPTKATTTCAPPTKPTCKSTSTTTTTTTTTTTTTTTTRAPPTKPTCKSTSTTTTTTRAPPTKPTCKSTSTTTTTTRAPPTTTCKTSTTTTTTHKPTTHSTPKTKPTKHTTPKTKPTKHTTPKTKPTKHTTPTTTTTTTPKPCGCKSCGPGGEPCKGCGKRSALCQDLNGLLRNLERQVRQCVCGQPDWLL</sequence>
<name>SGS3_DROSI</name>
<gene>
    <name type="primary">Sgs3</name>
</gene>